<accession>B8BI93</accession>
<organism>
    <name type="scientific">Oryza sativa subsp. indica</name>
    <name type="common">Rice</name>
    <dbReference type="NCBI Taxonomy" id="39946"/>
    <lineage>
        <taxon>Eukaryota</taxon>
        <taxon>Viridiplantae</taxon>
        <taxon>Streptophyta</taxon>
        <taxon>Embryophyta</taxon>
        <taxon>Tracheophyta</taxon>
        <taxon>Spermatophyta</taxon>
        <taxon>Magnoliopsida</taxon>
        <taxon>Liliopsida</taxon>
        <taxon>Poales</taxon>
        <taxon>Poaceae</taxon>
        <taxon>BOP clade</taxon>
        <taxon>Oryzoideae</taxon>
        <taxon>Oryzeae</taxon>
        <taxon>Oryzinae</taxon>
        <taxon>Oryza</taxon>
        <taxon>Oryza sativa</taxon>
    </lineage>
</organism>
<gene>
    <name evidence="1" type="primary">MYBS2</name>
    <name evidence="5" type="ORF">OsI_34656</name>
</gene>
<dbReference type="EMBL" id="CM000135">
    <property type="protein sequence ID" value="EEC67443.1"/>
    <property type="molecule type" value="Genomic_DNA"/>
</dbReference>
<dbReference type="SMR" id="B8BI93"/>
<dbReference type="STRING" id="39946.B8BI93"/>
<dbReference type="iPTMnet" id="B8BI93"/>
<dbReference type="EnsemblPlants" id="BGIOSGA031397-TA">
    <property type="protein sequence ID" value="BGIOSGA031397-PA"/>
    <property type="gene ID" value="BGIOSGA031397"/>
</dbReference>
<dbReference type="Gramene" id="BGIOSGA031397-TA">
    <property type="protein sequence ID" value="BGIOSGA031397-PA"/>
    <property type="gene ID" value="BGIOSGA031397"/>
</dbReference>
<dbReference type="HOGENOM" id="CLU_038424_5_1_1"/>
<dbReference type="OMA" id="PVMFRLF"/>
<dbReference type="Proteomes" id="UP000007015">
    <property type="component" value="Chromosome 10"/>
</dbReference>
<dbReference type="GO" id="GO:0005634">
    <property type="term" value="C:nucleus"/>
    <property type="evidence" value="ECO:0007669"/>
    <property type="project" value="UniProtKB-SubCell"/>
</dbReference>
<dbReference type="GO" id="GO:0003677">
    <property type="term" value="F:DNA binding"/>
    <property type="evidence" value="ECO:0007669"/>
    <property type="project" value="UniProtKB-KW"/>
</dbReference>
<dbReference type="GO" id="GO:0003700">
    <property type="term" value="F:DNA-binding transcription factor activity"/>
    <property type="evidence" value="ECO:0000250"/>
    <property type="project" value="UniProtKB"/>
</dbReference>
<dbReference type="GO" id="GO:0045893">
    <property type="term" value="P:positive regulation of DNA-templated transcription"/>
    <property type="evidence" value="ECO:0000250"/>
    <property type="project" value="UniProtKB"/>
</dbReference>
<dbReference type="GO" id="GO:0009723">
    <property type="term" value="P:response to ethylene"/>
    <property type="evidence" value="ECO:0007669"/>
    <property type="project" value="TreeGrafter"/>
</dbReference>
<dbReference type="GO" id="GO:0009739">
    <property type="term" value="P:response to gibberellin"/>
    <property type="evidence" value="ECO:0007669"/>
    <property type="project" value="EnsemblPlants"/>
</dbReference>
<dbReference type="GO" id="GO:0009744">
    <property type="term" value="P:response to sucrose"/>
    <property type="evidence" value="ECO:0007669"/>
    <property type="project" value="EnsemblPlants"/>
</dbReference>
<dbReference type="CDD" id="cd00167">
    <property type="entry name" value="SANT"/>
    <property type="match status" value="1"/>
</dbReference>
<dbReference type="FunFam" id="1.10.10.60:FF:000009">
    <property type="entry name" value="transcription factor MYB1R1"/>
    <property type="match status" value="1"/>
</dbReference>
<dbReference type="Gene3D" id="1.10.10.60">
    <property type="entry name" value="Homeodomain-like"/>
    <property type="match status" value="1"/>
</dbReference>
<dbReference type="InterPro" id="IPR009057">
    <property type="entry name" value="Homeodomain-like_sf"/>
</dbReference>
<dbReference type="InterPro" id="IPR017930">
    <property type="entry name" value="Myb_dom"/>
</dbReference>
<dbReference type="InterPro" id="IPR006447">
    <property type="entry name" value="Myb_dom_plants"/>
</dbReference>
<dbReference type="InterPro" id="IPR052245">
    <property type="entry name" value="Plant_Stress_Dev_TF"/>
</dbReference>
<dbReference type="InterPro" id="IPR001005">
    <property type="entry name" value="SANT/Myb"/>
</dbReference>
<dbReference type="InterPro" id="IPR017884">
    <property type="entry name" value="SANT_dom"/>
</dbReference>
<dbReference type="NCBIfam" id="TIGR01557">
    <property type="entry name" value="myb_SHAQKYF"/>
    <property type="match status" value="1"/>
</dbReference>
<dbReference type="PANTHER" id="PTHR44191">
    <property type="entry name" value="TRANSCRIPTION FACTOR KUA1"/>
    <property type="match status" value="1"/>
</dbReference>
<dbReference type="PANTHER" id="PTHR44191:SF70">
    <property type="entry name" value="TRANSCRIPTION FACTOR MYBS2"/>
    <property type="match status" value="1"/>
</dbReference>
<dbReference type="Pfam" id="PF00249">
    <property type="entry name" value="Myb_DNA-binding"/>
    <property type="match status" value="1"/>
</dbReference>
<dbReference type="SMART" id="SM00717">
    <property type="entry name" value="SANT"/>
    <property type="match status" value="1"/>
</dbReference>
<dbReference type="SUPFAM" id="SSF46689">
    <property type="entry name" value="Homeodomain-like"/>
    <property type="match status" value="1"/>
</dbReference>
<dbReference type="PROSITE" id="PS51294">
    <property type="entry name" value="HTH_MYB"/>
    <property type="match status" value="1"/>
</dbReference>
<feature type="chain" id="PRO_0000439176" description="Transcription factor MYBS2">
    <location>
        <begin position="1"/>
        <end position="265"/>
    </location>
</feature>
<feature type="domain" description="HTH myb-type" evidence="2">
    <location>
        <begin position="93"/>
        <end position="149"/>
    </location>
</feature>
<feature type="DNA-binding region" description="H-T-H motif" evidence="2">
    <location>
        <begin position="121"/>
        <end position="145"/>
    </location>
</feature>
<feature type="region of interest" description="Disordered" evidence="4">
    <location>
        <begin position="29"/>
        <end position="101"/>
    </location>
</feature>
<feature type="short sequence motif" description="Nuclear localization signal" evidence="3">
    <location>
        <begin position="71"/>
        <end position="78"/>
    </location>
</feature>
<feature type="compositionally biased region" description="Acidic residues" evidence="4">
    <location>
        <begin position="32"/>
        <end position="43"/>
    </location>
</feature>
<feature type="compositionally biased region" description="Polar residues" evidence="4">
    <location>
        <begin position="50"/>
        <end position="59"/>
    </location>
</feature>
<feature type="compositionally biased region" description="Basic residues" evidence="4">
    <location>
        <begin position="85"/>
        <end position="94"/>
    </location>
</feature>
<protein>
    <recommendedName>
        <fullName evidence="1">Transcription factor MYBS2</fullName>
    </recommendedName>
    <alternativeName>
        <fullName evidence="1">Myb-related protein S2</fullName>
        <shortName evidence="1">OsMYBS2</shortName>
    </alternativeName>
</protein>
<comment type="function">
    <text evidence="1">Transcription activator that binds to 5'-TATCCA-3' elements in gene promoters. Derepress weakly the sugar-repressed transcription of promoters containing SRS. Contributes to the sugar-repressed transcription of promoters containing 5'-TATCCA-3' elements.</text>
</comment>
<comment type="subcellular location">
    <subcellularLocation>
        <location evidence="3">Nucleus</location>
    </subcellularLocation>
</comment>
<keyword id="KW-0010">Activator</keyword>
<keyword id="KW-0238">DNA-binding</keyword>
<keyword id="KW-0539">Nucleus</keyword>
<keyword id="KW-1185">Reference proteome</keyword>
<keyword id="KW-0804">Transcription</keyword>
<keyword id="KW-0805">Transcription regulation</keyword>
<name>MYBS2_ORYSI</name>
<reference key="1">
    <citation type="journal article" date="2005" name="PLoS Biol.">
        <title>The genomes of Oryza sativa: a history of duplications.</title>
        <authorList>
            <person name="Yu J."/>
            <person name="Wang J."/>
            <person name="Lin W."/>
            <person name="Li S."/>
            <person name="Li H."/>
            <person name="Zhou J."/>
            <person name="Ni P."/>
            <person name="Dong W."/>
            <person name="Hu S."/>
            <person name="Zeng C."/>
            <person name="Zhang J."/>
            <person name="Zhang Y."/>
            <person name="Li R."/>
            <person name="Xu Z."/>
            <person name="Li S."/>
            <person name="Li X."/>
            <person name="Zheng H."/>
            <person name="Cong L."/>
            <person name="Lin L."/>
            <person name="Yin J."/>
            <person name="Geng J."/>
            <person name="Li G."/>
            <person name="Shi J."/>
            <person name="Liu J."/>
            <person name="Lv H."/>
            <person name="Li J."/>
            <person name="Wang J."/>
            <person name="Deng Y."/>
            <person name="Ran L."/>
            <person name="Shi X."/>
            <person name="Wang X."/>
            <person name="Wu Q."/>
            <person name="Li C."/>
            <person name="Ren X."/>
            <person name="Wang J."/>
            <person name="Wang X."/>
            <person name="Li D."/>
            <person name="Liu D."/>
            <person name="Zhang X."/>
            <person name="Ji Z."/>
            <person name="Zhao W."/>
            <person name="Sun Y."/>
            <person name="Zhang Z."/>
            <person name="Bao J."/>
            <person name="Han Y."/>
            <person name="Dong L."/>
            <person name="Ji J."/>
            <person name="Chen P."/>
            <person name="Wu S."/>
            <person name="Liu J."/>
            <person name="Xiao Y."/>
            <person name="Bu D."/>
            <person name="Tan J."/>
            <person name="Yang L."/>
            <person name="Ye C."/>
            <person name="Zhang J."/>
            <person name="Xu J."/>
            <person name="Zhou Y."/>
            <person name="Yu Y."/>
            <person name="Zhang B."/>
            <person name="Zhuang S."/>
            <person name="Wei H."/>
            <person name="Liu B."/>
            <person name="Lei M."/>
            <person name="Yu H."/>
            <person name="Li Y."/>
            <person name="Xu H."/>
            <person name="Wei S."/>
            <person name="He X."/>
            <person name="Fang L."/>
            <person name="Zhang Z."/>
            <person name="Zhang Y."/>
            <person name="Huang X."/>
            <person name="Su Z."/>
            <person name="Tong W."/>
            <person name="Li J."/>
            <person name="Tong Z."/>
            <person name="Li S."/>
            <person name="Ye J."/>
            <person name="Wang L."/>
            <person name="Fang L."/>
            <person name="Lei T."/>
            <person name="Chen C.-S."/>
            <person name="Chen H.-C."/>
            <person name="Xu Z."/>
            <person name="Li H."/>
            <person name="Huang H."/>
            <person name="Zhang F."/>
            <person name="Xu H."/>
            <person name="Li N."/>
            <person name="Zhao C."/>
            <person name="Li S."/>
            <person name="Dong L."/>
            <person name="Huang Y."/>
            <person name="Li L."/>
            <person name="Xi Y."/>
            <person name="Qi Q."/>
            <person name="Li W."/>
            <person name="Zhang B."/>
            <person name="Hu W."/>
            <person name="Zhang Y."/>
            <person name="Tian X."/>
            <person name="Jiao Y."/>
            <person name="Liang X."/>
            <person name="Jin J."/>
            <person name="Gao L."/>
            <person name="Zheng W."/>
            <person name="Hao B."/>
            <person name="Liu S.-M."/>
            <person name="Wang W."/>
            <person name="Yuan L."/>
            <person name="Cao M."/>
            <person name="McDermott J."/>
            <person name="Samudrala R."/>
            <person name="Wang J."/>
            <person name="Wong G.K.-S."/>
            <person name="Yang H."/>
        </authorList>
    </citation>
    <scope>NUCLEOTIDE SEQUENCE [LARGE SCALE GENOMIC DNA]</scope>
    <source>
        <strain>cv. 93-11</strain>
    </source>
</reference>
<evidence type="ECO:0000250" key="1">
    <source>
        <dbReference type="UniProtKB" id="Q7XC51"/>
    </source>
</evidence>
<evidence type="ECO:0000255" key="2">
    <source>
        <dbReference type="PROSITE-ProRule" id="PRU00625"/>
    </source>
</evidence>
<evidence type="ECO:0000255" key="3">
    <source>
        <dbReference type="PROSITE-ProRule" id="PRU00768"/>
    </source>
</evidence>
<evidence type="ECO:0000256" key="4">
    <source>
        <dbReference type="SAM" id="MobiDB-lite"/>
    </source>
</evidence>
<evidence type="ECO:0000312" key="5">
    <source>
        <dbReference type="EMBL" id="EEC67443.1"/>
    </source>
</evidence>
<proteinExistence type="inferred from homology"/>
<sequence>MEQHEEAAERKPSPPVIFRLFGVEVRGGGGGVDEEEYEEEEVEGGLFIKKSSSMPNLTSIDPLPVPADGGKRRASDDSELASGQQKRRRRKVQERKKGVPWTEEEHKKFLEGLRQLGKGDWRGISKNFVTSRTATQVASHAQKYFLRQTNPGKKKRRASLFDVVAECSDDQLPSPQSVGTKPPTQDIIHTDRGDVPILSYPVARGFRGDSVQVDELTEYVKRLKAAEDMSLSMISGLEMASSSISSLELSIAPPHCAIEAAIKVL</sequence>